<protein>
    <recommendedName>
        <fullName>Mitochondrial import inner membrane translocase subunit TIM21</fullName>
    </recommendedName>
</protein>
<accession>Q6FMZ2</accession>
<feature type="transit peptide" description="Mitochondrion" evidence="2">
    <location>
        <begin position="1"/>
        <end position="15"/>
    </location>
</feature>
<feature type="chain" id="PRO_0000043143" description="Mitochondrial import inner membrane translocase subunit TIM21">
    <location>
        <begin position="16"/>
        <end position="215"/>
    </location>
</feature>
<feature type="topological domain" description="Mitochondrial matrix" evidence="2">
    <location>
        <begin position="16"/>
        <end position="55"/>
    </location>
</feature>
<feature type="transmembrane region" description="Helical" evidence="2">
    <location>
        <begin position="56"/>
        <end position="76"/>
    </location>
</feature>
<feature type="topological domain" description="Mitochondrial intermembrane" evidence="2">
    <location>
        <begin position="77"/>
        <end position="215"/>
    </location>
</feature>
<evidence type="ECO:0000250" key="1"/>
<evidence type="ECO:0000255" key="2"/>
<evidence type="ECO:0000305" key="3"/>
<proteinExistence type="inferred from homology"/>
<dbReference type="EMBL" id="CR380957">
    <property type="protein sequence ID" value="CAG61363.1"/>
    <property type="molecule type" value="Genomic_DNA"/>
</dbReference>
<dbReference type="RefSeq" id="XP_448402.1">
    <property type="nucleotide sequence ID" value="XM_448402.1"/>
</dbReference>
<dbReference type="SMR" id="Q6FMZ2"/>
<dbReference type="FunCoup" id="Q6FMZ2">
    <property type="interactions" value="287"/>
</dbReference>
<dbReference type="STRING" id="284593.Q6FMZ2"/>
<dbReference type="KEGG" id="cgr:2890041"/>
<dbReference type="eggNOG" id="KOG4836">
    <property type="taxonomic scope" value="Eukaryota"/>
</dbReference>
<dbReference type="HOGENOM" id="CLU_089043_1_0_1"/>
<dbReference type="InParanoid" id="Q6FMZ2"/>
<dbReference type="OMA" id="HVESKQK"/>
<dbReference type="Proteomes" id="UP000002428">
    <property type="component" value="Chromosome K"/>
</dbReference>
<dbReference type="GO" id="GO:0005744">
    <property type="term" value="C:TIM23 mitochondrial import inner membrane translocase complex"/>
    <property type="evidence" value="ECO:0007669"/>
    <property type="project" value="InterPro"/>
</dbReference>
<dbReference type="GO" id="GO:0030150">
    <property type="term" value="P:protein import into mitochondrial matrix"/>
    <property type="evidence" value="ECO:0007669"/>
    <property type="project" value="InterPro"/>
</dbReference>
<dbReference type="FunFam" id="3.10.450.320:FF:000002">
    <property type="entry name" value="Mitochondrial import inner membrane translocase subunit tim21"/>
    <property type="match status" value="1"/>
</dbReference>
<dbReference type="Gene3D" id="3.10.450.320">
    <property type="entry name" value="Mitochondrial import inner membrane translocase subunit Tim21"/>
    <property type="match status" value="1"/>
</dbReference>
<dbReference type="InterPro" id="IPR013261">
    <property type="entry name" value="Tim21"/>
</dbReference>
<dbReference type="InterPro" id="IPR038552">
    <property type="entry name" value="Tim21_IMS_sf"/>
</dbReference>
<dbReference type="PANTHER" id="PTHR13032">
    <property type="entry name" value="MITOCHONDRIAL IMPORT INNER MEMBRANE TRANSLOCASE SUBUNIT TIM21"/>
    <property type="match status" value="1"/>
</dbReference>
<dbReference type="PANTHER" id="PTHR13032:SF6">
    <property type="entry name" value="MITOCHONDRIAL IMPORT INNER MEMBRANE TRANSLOCASE SUBUNIT TIM21"/>
    <property type="match status" value="1"/>
</dbReference>
<dbReference type="Pfam" id="PF08294">
    <property type="entry name" value="TIM21"/>
    <property type="match status" value="1"/>
</dbReference>
<keyword id="KW-0472">Membrane</keyword>
<keyword id="KW-0496">Mitochondrion</keyword>
<keyword id="KW-0999">Mitochondrion inner membrane</keyword>
<keyword id="KW-0653">Protein transport</keyword>
<keyword id="KW-1185">Reference proteome</keyword>
<keyword id="KW-0809">Transit peptide</keyword>
<keyword id="KW-0811">Translocation</keyword>
<keyword id="KW-0812">Transmembrane</keyword>
<keyword id="KW-1133">Transmembrane helix</keyword>
<keyword id="KW-0813">Transport</keyword>
<organism>
    <name type="scientific">Candida glabrata (strain ATCC 2001 / BCRC 20586 / JCM 3761 / NBRC 0622 / NRRL Y-65 / CBS 138)</name>
    <name type="common">Yeast</name>
    <name type="synonym">Nakaseomyces glabratus</name>
    <dbReference type="NCBI Taxonomy" id="284593"/>
    <lineage>
        <taxon>Eukaryota</taxon>
        <taxon>Fungi</taxon>
        <taxon>Dikarya</taxon>
        <taxon>Ascomycota</taxon>
        <taxon>Saccharomycotina</taxon>
        <taxon>Saccharomycetes</taxon>
        <taxon>Saccharomycetales</taxon>
        <taxon>Saccharomycetaceae</taxon>
        <taxon>Nakaseomyces</taxon>
    </lineage>
</organism>
<reference key="1">
    <citation type="journal article" date="2004" name="Nature">
        <title>Genome evolution in yeasts.</title>
        <authorList>
            <person name="Dujon B."/>
            <person name="Sherman D."/>
            <person name="Fischer G."/>
            <person name="Durrens P."/>
            <person name="Casaregola S."/>
            <person name="Lafontaine I."/>
            <person name="de Montigny J."/>
            <person name="Marck C."/>
            <person name="Neuveglise C."/>
            <person name="Talla E."/>
            <person name="Goffard N."/>
            <person name="Frangeul L."/>
            <person name="Aigle M."/>
            <person name="Anthouard V."/>
            <person name="Babour A."/>
            <person name="Barbe V."/>
            <person name="Barnay S."/>
            <person name="Blanchin S."/>
            <person name="Beckerich J.-M."/>
            <person name="Beyne E."/>
            <person name="Bleykasten C."/>
            <person name="Boisrame A."/>
            <person name="Boyer J."/>
            <person name="Cattolico L."/>
            <person name="Confanioleri F."/>
            <person name="de Daruvar A."/>
            <person name="Despons L."/>
            <person name="Fabre E."/>
            <person name="Fairhead C."/>
            <person name="Ferry-Dumazet H."/>
            <person name="Groppi A."/>
            <person name="Hantraye F."/>
            <person name="Hennequin C."/>
            <person name="Jauniaux N."/>
            <person name="Joyet P."/>
            <person name="Kachouri R."/>
            <person name="Kerrest A."/>
            <person name="Koszul R."/>
            <person name="Lemaire M."/>
            <person name="Lesur I."/>
            <person name="Ma L."/>
            <person name="Muller H."/>
            <person name="Nicaud J.-M."/>
            <person name="Nikolski M."/>
            <person name="Oztas S."/>
            <person name="Ozier-Kalogeropoulos O."/>
            <person name="Pellenz S."/>
            <person name="Potier S."/>
            <person name="Richard G.-F."/>
            <person name="Straub M.-L."/>
            <person name="Suleau A."/>
            <person name="Swennen D."/>
            <person name="Tekaia F."/>
            <person name="Wesolowski-Louvel M."/>
            <person name="Westhof E."/>
            <person name="Wirth B."/>
            <person name="Zeniou-Meyer M."/>
            <person name="Zivanovic Y."/>
            <person name="Bolotin-Fukuhara M."/>
            <person name="Thierry A."/>
            <person name="Bouchier C."/>
            <person name="Caudron B."/>
            <person name="Scarpelli C."/>
            <person name="Gaillardin C."/>
            <person name="Weissenbach J."/>
            <person name="Wincker P."/>
            <person name="Souciet J.-L."/>
        </authorList>
    </citation>
    <scope>NUCLEOTIDE SEQUENCE [LARGE SCALE GENOMIC DNA]</scope>
    <source>
        <strain>ATCC 2001 / BCRC 20586 / JCM 3761 / NBRC 0622 / NRRL Y-65 / CBS 138</strain>
    </source>
</reference>
<sequence>MVLRSRPLASIPRVQFYSSKGKSKGKTSGEKKPEHKKIPVWHKLKALTSFTASSLLVVGGVGVSGVVLYLILSELFSPSGDTMLFNRAVTLVEDNEEVRKLLQCNDSSFKKERLKAYGELVTNDRWTRNRPIVSTQKIDKYGKCHHFMRFHLESKKKLGLVHVEAVDSEQNYKPNFVSMYIDIPGEKRFYIIRPKLRQVVRPKSIFGFPWGSRKE</sequence>
<gene>
    <name type="primary">TIM21</name>
    <name type="ordered locus">CAGL0K04059g</name>
</gene>
<name>TIM21_CANGA</name>
<comment type="function">
    <text evidence="1">Essential component of the TIM23 complex, a complex that mediates the translocation of transit peptide-containing proteins across the mitochondrial inner membrane. Required to keep the TOM and the TIM23 complexes in close contact. At some point, it is released from the TOM23 complex to allow protein translocation into the mitochondrial matrix (By similarity).</text>
</comment>
<comment type="subunit">
    <text evidence="1">Component of the TIM23 complex, at least composed of TIM23, TIM17, TIM50 and TIM21.</text>
</comment>
<comment type="subcellular location">
    <subcellularLocation>
        <location evidence="1">Mitochondrion inner membrane</location>
        <topology evidence="1">Single-pass membrane protein</topology>
    </subcellularLocation>
</comment>
<comment type="similarity">
    <text evidence="3">Belongs to the TIM21 family.</text>
</comment>